<sequence length="349" mass="38012">MISVGIVGGTGYTGVELLRILLRHPKAQVRVLTSRTEAGKPVADMFPNLRGHTDLQFSDLNIDALKECDVVFFATPHGVAMQHAKDLIAAGTKVIDLAADFRLQNLEQFEKWYGMEHACPDVLKDSVYGLTELNREKIKQAQVIGNPGCYPTTVQLGLAPLLKSAQALIETKNIIIDAKSGVSGAGRKASLGMIYSENADNFKAYGVAGHRHHPEIVEALENIAGKKDVFEGLLFVPHLVPMIRGMLSTIYVDLTEAGKQTALQALYENFYANEKFVDVMPANSSPETRSVRGANELRIALYKPQPNKLIILAAQDNLVKGASGQAVQNMNLMFGFNEDEGLQGIGLLP</sequence>
<feature type="chain" id="PRO_1000096710" description="N-acetyl-gamma-glutamyl-phosphate reductase">
    <location>
        <begin position="1"/>
        <end position="349"/>
    </location>
</feature>
<feature type="active site" evidence="1">
    <location>
        <position position="149"/>
    </location>
</feature>
<name>ARGC_ACIBY</name>
<accession>B0V684</accession>
<gene>
    <name evidence="1" type="primary">argC</name>
    <name type="ordered locus">ABAYE1653</name>
</gene>
<proteinExistence type="inferred from homology"/>
<reference key="1">
    <citation type="journal article" date="2008" name="PLoS ONE">
        <title>Comparative analysis of Acinetobacters: three genomes for three lifestyles.</title>
        <authorList>
            <person name="Vallenet D."/>
            <person name="Nordmann P."/>
            <person name="Barbe V."/>
            <person name="Poirel L."/>
            <person name="Mangenot S."/>
            <person name="Bataille E."/>
            <person name="Dossat C."/>
            <person name="Gas S."/>
            <person name="Kreimeyer A."/>
            <person name="Lenoble P."/>
            <person name="Oztas S."/>
            <person name="Poulain J."/>
            <person name="Segurens B."/>
            <person name="Robert C."/>
            <person name="Abergel C."/>
            <person name="Claverie J.-M."/>
            <person name="Raoult D."/>
            <person name="Medigue C."/>
            <person name="Weissenbach J."/>
            <person name="Cruveiller S."/>
        </authorList>
    </citation>
    <scope>NUCLEOTIDE SEQUENCE [LARGE SCALE GENOMIC DNA]</scope>
    <source>
        <strain>AYE</strain>
    </source>
</reference>
<dbReference type="EC" id="1.2.1.38" evidence="1"/>
<dbReference type="EMBL" id="CU459141">
    <property type="protein sequence ID" value="CAM86545.1"/>
    <property type="molecule type" value="Genomic_DNA"/>
</dbReference>
<dbReference type="SMR" id="B0V684"/>
<dbReference type="EnsemblBacteria" id="CAM86545">
    <property type="protein sequence ID" value="CAM86545"/>
    <property type="gene ID" value="ABAYE1653"/>
</dbReference>
<dbReference type="KEGG" id="aby:ABAYE1653"/>
<dbReference type="HOGENOM" id="CLU_006384_0_1_6"/>
<dbReference type="UniPathway" id="UPA00068">
    <property type="reaction ID" value="UER00108"/>
</dbReference>
<dbReference type="GO" id="GO:0005737">
    <property type="term" value="C:cytoplasm"/>
    <property type="evidence" value="ECO:0007669"/>
    <property type="project" value="UniProtKB-SubCell"/>
</dbReference>
<dbReference type="GO" id="GO:0003942">
    <property type="term" value="F:N-acetyl-gamma-glutamyl-phosphate reductase activity"/>
    <property type="evidence" value="ECO:0007669"/>
    <property type="project" value="UniProtKB-UniRule"/>
</dbReference>
<dbReference type="GO" id="GO:0051287">
    <property type="term" value="F:NAD binding"/>
    <property type="evidence" value="ECO:0007669"/>
    <property type="project" value="InterPro"/>
</dbReference>
<dbReference type="GO" id="GO:0070401">
    <property type="term" value="F:NADP+ binding"/>
    <property type="evidence" value="ECO:0007669"/>
    <property type="project" value="InterPro"/>
</dbReference>
<dbReference type="GO" id="GO:0006526">
    <property type="term" value="P:L-arginine biosynthetic process"/>
    <property type="evidence" value="ECO:0007669"/>
    <property type="project" value="UniProtKB-UniRule"/>
</dbReference>
<dbReference type="CDD" id="cd23934">
    <property type="entry name" value="AGPR_1_C"/>
    <property type="match status" value="1"/>
</dbReference>
<dbReference type="CDD" id="cd17895">
    <property type="entry name" value="AGPR_1_N"/>
    <property type="match status" value="1"/>
</dbReference>
<dbReference type="FunFam" id="3.30.360.10:FF:000014">
    <property type="entry name" value="N-acetyl-gamma-glutamyl-phosphate reductase"/>
    <property type="match status" value="1"/>
</dbReference>
<dbReference type="Gene3D" id="3.30.360.10">
    <property type="entry name" value="Dihydrodipicolinate Reductase, domain 2"/>
    <property type="match status" value="1"/>
</dbReference>
<dbReference type="Gene3D" id="3.40.50.720">
    <property type="entry name" value="NAD(P)-binding Rossmann-like Domain"/>
    <property type="match status" value="1"/>
</dbReference>
<dbReference type="HAMAP" id="MF_00150">
    <property type="entry name" value="ArgC_type1"/>
    <property type="match status" value="1"/>
</dbReference>
<dbReference type="InterPro" id="IPR023013">
    <property type="entry name" value="AGPR_AS"/>
</dbReference>
<dbReference type="InterPro" id="IPR000706">
    <property type="entry name" value="AGPR_type-1"/>
</dbReference>
<dbReference type="InterPro" id="IPR036291">
    <property type="entry name" value="NAD(P)-bd_dom_sf"/>
</dbReference>
<dbReference type="InterPro" id="IPR050085">
    <property type="entry name" value="NAGSA_dehydrogenase"/>
</dbReference>
<dbReference type="InterPro" id="IPR000534">
    <property type="entry name" value="Semialdehyde_DH_NAD-bd"/>
</dbReference>
<dbReference type="NCBIfam" id="TIGR01850">
    <property type="entry name" value="argC"/>
    <property type="match status" value="1"/>
</dbReference>
<dbReference type="PANTHER" id="PTHR32338:SF10">
    <property type="entry name" value="N-ACETYL-GAMMA-GLUTAMYL-PHOSPHATE REDUCTASE, CHLOROPLASTIC-RELATED"/>
    <property type="match status" value="1"/>
</dbReference>
<dbReference type="PANTHER" id="PTHR32338">
    <property type="entry name" value="N-ACETYL-GAMMA-GLUTAMYL-PHOSPHATE REDUCTASE, CHLOROPLASTIC-RELATED-RELATED"/>
    <property type="match status" value="1"/>
</dbReference>
<dbReference type="Pfam" id="PF01118">
    <property type="entry name" value="Semialdhyde_dh"/>
    <property type="match status" value="1"/>
</dbReference>
<dbReference type="Pfam" id="PF22698">
    <property type="entry name" value="Semialdhyde_dhC_1"/>
    <property type="match status" value="1"/>
</dbReference>
<dbReference type="SMART" id="SM00859">
    <property type="entry name" value="Semialdhyde_dh"/>
    <property type="match status" value="1"/>
</dbReference>
<dbReference type="SUPFAM" id="SSF55347">
    <property type="entry name" value="Glyceraldehyde-3-phosphate dehydrogenase-like, C-terminal domain"/>
    <property type="match status" value="1"/>
</dbReference>
<dbReference type="SUPFAM" id="SSF51735">
    <property type="entry name" value="NAD(P)-binding Rossmann-fold domains"/>
    <property type="match status" value="1"/>
</dbReference>
<dbReference type="PROSITE" id="PS01224">
    <property type="entry name" value="ARGC"/>
    <property type="match status" value="1"/>
</dbReference>
<comment type="function">
    <text evidence="1">Catalyzes the NADPH-dependent reduction of N-acetyl-5-glutamyl phosphate to yield N-acetyl-L-glutamate 5-semialdehyde.</text>
</comment>
<comment type="catalytic activity">
    <reaction evidence="1">
        <text>N-acetyl-L-glutamate 5-semialdehyde + phosphate + NADP(+) = N-acetyl-L-glutamyl 5-phosphate + NADPH + H(+)</text>
        <dbReference type="Rhea" id="RHEA:21588"/>
        <dbReference type="ChEBI" id="CHEBI:15378"/>
        <dbReference type="ChEBI" id="CHEBI:29123"/>
        <dbReference type="ChEBI" id="CHEBI:43474"/>
        <dbReference type="ChEBI" id="CHEBI:57783"/>
        <dbReference type="ChEBI" id="CHEBI:57936"/>
        <dbReference type="ChEBI" id="CHEBI:58349"/>
        <dbReference type="EC" id="1.2.1.38"/>
    </reaction>
</comment>
<comment type="pathway">
    <text evidence="1">Amino-acid biosynthesis; L-arginine biosynthesis; N(2)-acetyl-L-ornithine from L-glutamate: step 3/4.</text>
</comment>
<comment type="subcellular location">
    <subcellularLocation>
        <location evidence="1">Cytoplasm</location>
    </subcellularLocation>
</comment>
<comment type="similarity">
    <text evidence="1">Belongs to the NAGSA dehydrogenase family. Type 1 subfamily.</text>
</comment>
<keyword id="KW-0028">Amino-acid biosynthesis</keyword>
<keyword id="KW-0055">Arginine biosynthesis</keyword>
<keyword id="KW-0963">Cytoplasm</keyword>
<keyword id="KW-0521">NADP</keyword>
<keyword id="KW-0560">Oxidoreductase</keyword>
<protein>
    <recommendedName>
        <fullName evidence="1">N-acetyl-gamma-glutamyl-phosphate reductase</fullName>
        <shortName evidence="1">AGPR</shortName>
        <ecNumber evidence="1">1.2.1.38</ecNumber>
    </recommendedName>
    <alternativeName>
        <fullName evidence="1">N-acetyl-glutamate semialdehyde dehydrogenase</fullName>
        <shortName evidence="1">NAGSA dehydrogenase</shortName>
    </alternativeName>
</protein>
<evidence type="ECO:0000255" key="1">
    <source>
        <dbReference type="HAMAP-Rule" id="MF_00150"/>
    </source>
</evidence>
<organism>
    <name type="scientific">Acinetobacter baumannii (strain AYE)</name>
    <dbReference type="NCBI Taxonomy" id="509173"/>
    <lineage>
        <taxon>Bacteria</taxon>
        <taxon>Pseudomonadati</taxon>
        <taxon>Pseudomonadota</taxon>
        <taxon>Gammaproteobacteria</taxon>
        <taxon>Moraxellales</taxon>
        <taxon>Moraxellaceae</taxon>
        <taxon>Acinetobacter</taxon>
        <taxon>Acinetobacter calcoaceticus/baumannii complex</taxon>
    </lineage>
</organism>